<feature type="chain" id="PRO_0000412362" description="Signal peptidase complex catalytic subunit SEC11">
    <location>
        <begin position="1"/>
        <end position="167"/>
    </location>
</feature>
<feature type="topological domain" description="Cytoplasmic" evidence="3">
    <location>
        <begin position="1"/>
        <end position="9"/>
    </location>
</feature>
<feature type="transmembrane region" description="Helical; Signal-anchor for type II membrane protein" evidence="3">
    <location>
        <begin position="10"/>
        <end position="30"/>
    </location>
</feature>
<feature type="topological domain" description="Lumenal" evidence="3">
    <location>
        <begin position="31"/>
        <end position="167"/>
    </location>
</feature>
<feature type="region of interest" description="C-terminal short (CTS) helix" evidence="2">
    <location>
        <begin position="153"/>
        <end position="164"/>
    </location>
</feature>
<feature type="active site" description="Charge relay system" evidence="1">
    <location>
        <position position="44"/>
    </location>
</feature>
<feature type="active site" description="Charge relay system" evidence="1">
    <location>
        <position position="83"/>
    </location>
</feature>
<feature type="active site" description="Charge relay system" evidence="1">
    <location>
        <position position="109"/>
    </location>
</feature>
<feature type="glycosylation site" description="N-linked (GlcNAc...) asparagine" evidence="3">
    <location>
        <position position="121"/>
    </location>
</feature>
<name>SEC11_YEASZ</name>
<organism>
    <name type="scientific">Saccharomyces cerevisiae (strain Zymaflore VL3)</name>
    <name type="common">Baker's yeast</name>
    <dbReference type="NCBI Taxonomy" id="764100"/>
    <lineage>
        <taxon>Eukaryota</taxon>
        <taxon>Fungi</taxon>
        <taxon>Dikarya</taxon>
        <taxon>Ascomycota</taxon>
        <taxon>Saccharomycotina</taxon>
        <taxon>Saccharomycetes</taxon>
        <taxon>Saccharomycetales</taxon>
        <taxon>Saccharomycetaceae</taxon>
        <taxon>Saccharomyces</taxon>
    </lineage>
</organism>
<evidence type="ECO:0000250" key="1">
    <source>
        <dbReference type="UniProtKB" id="P15367"/>
    </source>
</evidence>
<evidence type="ECO:0000250" key="2">
    <source>
        <dbReference type="UniProtKB" id="P67812"/>
    </source>
</evidence>
<evidence type="ECO:0000255" key="3"/>
<evidence type="ECO:0000305" key="4"/>
<sequence length="167" mass="18762">MNLRFELQKLLNVCFLFASAYMFWQGLAIATNSASPIVVVLSGSMEPAFQRGDILFLWNRNTFNQVGDVVVYEVEGKQIPIVHRVLRQHNNHADKQFLLTKGDNNAGNDISLYANKKIYLNKSKEIVGTVKGYFPQLGYITIWISENKYAKFALLGMLGLSALLGGE</sequence>
<gene>
    <name type="primary">SEC11</name>
    <name type="ORF">VL3_2426</name>
</gene>
<proteinExistence type="inferred from homology"/>
<dbReference type="EC" id="3.4.21.89" evidence="1"/>
<dbReference type="EMBL" id="AEJS01000039">
    <property type="protein sequence ID" value="EGA86328.1"/>
    <property type="molecule type" value="Genomic_DNA"/>
</dbReference>
<dbReference type="SMR" id="E7QG89"/>
<dbReference type="MEROPS" id="S26.010"/>
<dbReference type="GlyCosmos" id="E7QG89">
    <property type="glycosylation" value="1 site, No reported glycans"/>
</dbReference>
<dbReference type="HOGENOM" id="CLU_089996_0_0_1"/>
<dbReference type="OrthoDB" id="10257561at2759"/>
<dbReference type="GO" id="GO:0005787">
    <property type="term" value="C:signal peptidase complex"/>
    <property type="evidence" value="ECO:0007669"/>
    <property type="project" value="UniProtKB-ARBA"/>
</dbReference>
<dbReference type="GO" id="GO:0004252">
    <property type="term" value="F:serine-type endopeptidase activity"/>
    <property type="evidence" value="ECO:0007669"/>
    <property type="project" value="UniProtKB-EC"/>
</dbReference>
<dbReference type="GO" id="GO:0006465">
    <property type="term" value="P:signal peptide processing"/>
    <property type="evidence" value="ECO:0007669"/>
    <property type="project" value="InterPro"/>
</dbReference>
<dbReference type="CDD" id="cd06462">
    <property type="entry name" value="Peptidase_S24_S26"/>
    <property type="match status" value="1"/>
</dbReference>
<dbReference type="InterPro" id="IPR036286">
    <property type="entry name" value="LexA/Signal_pep-like_sf"/>
</dbReference>
<dbReference type="InterPro" id="IPR019758">
    <property type="entry name" value="Pept_S26A_signal_pept_1_CS"/>
</dbReference>
<dbReference type="InterPro" id="IPR019756">
    <property type="entry name" value="Pept_S26A_signal_pept_1_Ser-AS"/>
</dbReference>
<dbReference type="InterPro" id="IPR015927">
    <property type="entry name" value="Peptidase_S24_S26A/B/C"/>
</dbReference>
<dbReference type="InterPro" id="IPR001733">
    <property type="entry name" value="Peptidase_S26B"/>
</dbReference>
<dbReference type="NCBIfam" id="TIGR02228">
    <property type="entry name" value="sigpep_I_arch"/>
    <property type="match status" value="1"/>
</dbReference>
<dbReference type="PANTHER" id="PTHR10806">
    <property type="entry name" value="SIGNAL PEPTIDASE COMPLEX CATALYTIC SUBUNIT SEC11"/>
    <property type="match status" value="1"/>
</dbReference>
<dbReference type="PANTHER" id="PTHR10806:SF6">
    <property type="entry name" value="SIGNAL PEPTIDASE COMPLEX CATALYTIC SUBUNIT SEC11"/>
    <property type="match status" value="1"/>
</dbReference>
<dbReference type="Pfam" id="PF00717">
    <property type="entry name" value="Peptidase_S24"/>
    <property type="match status" value="1"/>
</dbReference>
<dbReference type="PRINTS" id="PR00728">
    <property type="entry name" value="SIGNALPTASE"/>
</dbReference>
<dbReference type="SUPFAM" id="SSF51306">
    <property type="entry name" value="LexA/Signal peptidase"/>
    <property type="match status" value="1"/>
</dbReference>
<dbReference type="PROSITE" id="PS00501">
    <property type="entry name" value="SPASE_I_1"/>
    <property type="match status" value="1"/>
</dbReference>
<dbReference type="PROSITE" id="PS00761">
    <property type="entry name" value="SPASE_I_3"/>
    <property type="match status" value="1"/>
</dbReference>
<protein>
    <recommendedName>
        <fullName>Signal peptidase complex catalytic subunit SEC11</fullName>
        <ecNumber evidence="1">3.4.21.89</ecNumber>
    </recommendedName>
    <alternativeName>
        <fullName>Secretory protein 11</fullName>
    </alternativeName>
    <alternativeName>
        <fullName>Signal peptidase I</fullName>
    </alternativeName>
</protein>
<reference key="1">
    <citation type="journal article" date="2011" name="PLoS Genet.">
        <title>Whole-genome comparison reveals novel genetic elements that characterize the genome of industrial strains of Saccharomyces cerevisiae.</title>
        <authorList>
            <person name="Borneman A.R."/>
            <person name="Desany B.A."/>
            <person name="Riches D."/>
            <person name="Affourtit J.P."/>
            <person name="Forgan A.H."/>
            <person name="Pretorius I.S."/>
            <person name="Egholm M."/>
            <person name="Chambers P.J."/>
        </authorList>
    </citation>
    <scope>NUCLEOTIDE SEQUENCE [LARGE SCALE GENOMIC DNA]</scope>
    <source>
        <strain>Zymaflore VL3</strain>
    </source>
</reference>
<accession>E7QG89</accession>
<keyword id="KW-0256">Endoplasmic reticulum</keyword>
<keyword id="KW-0325">Glycoprotein</keyword>
<keyword id="KW-0378">Hydrolase</keyword>
<keyword id="KW-0472">Membrane</keyword>
<keyword id="KW-0645">Protease</keyword>
<keyword id="KW-0735">Signal-anchor</keyword>
<keyword id="KW-0812">Transmembrane</keyword>
<keyword id="KW-1133">Transmembrane helix</keyword>
<comment type="function">
    <text evidence="1 2">Catalytic component of the signal peptidase complex (SPC) which catalyzes the cleavage of N-terminal signal sequences from nascent proteins as they are translocated into the lumen of the endoplasmic reticulum (By similarity). Specifically cleaves N-terminal signal peptides that contain a hydrophobic alpha-helix (h-region) shorter than 18-20 amino acids (By similarity).</text>
</comment>
<comment type="catalytic activity">
    <reaction evidence="1">
        <text>Cleavage of hydrophobic, N-terminal signal or leader sequences from secreted and periplasmic proteins.</text>
        <dbReference type="EC" id="3.4.21.89"/>
    </reaction>
</comment>
<comment type="subunit">
    <text evidence="1 2">Component of the signal peptidase complex (SPC) composed of a catalytic subunit SEC11 and three accessory subunits SPC1, SPC2 and SPC3 (By similarity). The complex induces a local thinning of the ER membrane which is used to measure the length of the signal peptide (SP) h-region of protein substrates. This ensures the selectivity of the complex towards h-regions shorter than 18-20 amino acids (By similarity). SPC associates with the translocon complex (By similarity).</text>
</comment>
<comment type="subcellular location">
    <subcellularLocation>
        <location evidence="1">Endoplasmic reticulum membrane</location>
        <topology evidence="1">Single-pass type II membrane protein</topology>
    </subcellularLocation>
</comment>
<comment type="domain">
    <text evidence="2">The C-terminal short (CTS) helix is essential for catalytic activity. It may be accommodated as a transmembrane helix in the thinned membrane environment of the complex, similarly to the signal peptide in the complex substrates.</text>
</comment>
<comment type="similarity">
    <text evidence="4">Belongs to the peptidase S26B family.</text>
</comment>